<sequence length="131" mass="14100">MSWQAYVDDHLLCGIEGNHLTHAAIIGQDGSVWLQSTDFPQFKPEEITAIMNDFNEPGSLAPTGLYLGGTKYMVIQGEPGAVIRGKKGPGGVTVKKTGAALIIGIYDEPMTPGQCNMVVERLGDYLIDQGY</sequence>
<dbReference type="EMBL" id="AJ223981">
    <property type="protein sequence ID" value="CAA11755.1"/>
    <property type="molecule type" value="mRNA"/>
</dbReference>
<dbReference type="PIR" id="T07773">
    <property type="entry name" value="T07773"/>
</dbReference>
<dbReference type="RefSeq" id="NP_001236192.1">
    <property type="nucleotide sequence ID" value="NM_001249263.1"/>
</dbReference>
<dbReference type="SMR" id="O65810"/>
<dbReference type="FunCoup" id="O65810">
    <property type="interactions" value="2972"/>
</dbReference>
<dbReference type="STRING" id="3847.O65810"/>
<dbReference type="Allergome" id="372">
    <property type="allergen name" value="Gly m 3"/>
</dbReference>
<dbReference type="Allergome" id="374">
    <property type="allergen name" value="Gly m 3.0102"/>
</dbReference>
<dbReference type="GeneID" id="547670"/>
<dbReference type="KEGG" id="gmx:547670"/>
<dbReference type="InParanoid" id="O65810"/>
<dbReference type="OrthoDB" id="421374at2759"/>
<dbReference type="Proteomes" id="UP000008827">
    <property type="component" value="Unplaced"/>
</dbReference>
<dbReference type="GO" id="GO:0005938">
    <property type="term" value="C:cell cortex"/>
    <property type="evidence" value="ECO:0000318"/>
    <property type="project" value="GO_Central"/>
</dbReference>
<dbReference type="GO" id="GO:0005856">
    <property type="term" value="C:cytoskeleton"/>
    <property type="evidence" value="ECO:0007669"/>
    <property type="project" value="UniProtKB-SubCell"/>
</dbReference>
<dbReference type="GO" id="GO:0003785">
    <property type="term" value="F:actin monomer binding"/>
    <property type="evidence" value="ECO:0000318"/>
    <property type="project" value="GO_Central"/>
</dbReference>
<dbReference type="CDD" id="cd00148">
    <property type="entry name" value="PROF"/>
    <property type="match status" value="1"/>
</dbReference>
<dbReference type="FunFam" id="3.30.450.30:FF:000001">
    <property type="entry name" value="Profilin"/>
    <property type="match status" value="1"/>
</dbReference>
<dbReference type="Gene3D" id="3.30.450.30">
    <property type="entry name" value="Dynein light chain 2a, cytoplasmic"/>
    <property type="match status" value="1"/>
</dbReference>
<dbReference type="InterPro" id="IPR048278">
    <property type="entry name" value="PFN"/>
</dbReference>
<dbReference type="InterPro" id="IPR005455">
    <property type="entry name" value="PFN_euk"/>
</dbReference>
<dbReference type="InterPro" id="IPR036140">
    <property type="entry name" value="PFN_sf"/>
</dbReference>
<dbReference type="InterPro" id="IPR027310">
    <property type="entry name" value="Profilin_CS"/>
</dbReference>
<dbReference type="PANTHER" id="PTHR11604">
    <property type="entry name" value="PROFILIN"/>
    <property type="match status" value="1"/>
</dbReference>
<dbReference type="PANTHER" id="PTHR11604:SF46">
    <property type="entry name" value="PROFILIN-1"/>
    <property type="match status" value="1"/>
</dbReference>
<dbReference type="Pfam" id="PF00235">
    <property type="entry name" value="Profilin"/>
    <property type="match status" value="1"/>
</dbReference>
<dbReference type="PRINTS" id="PR00392">
    <property type="entry name" value="PROFILIN"/>
</dbReference>
<dbReference type="PRINTS" id="PR01640">
    <property type="entry name" value="PROFILINPLNT"/>
</dbReference>
<dbReference type="SMART" id="SM00392">
    <property type="entry name" value="PROF"/>
    <property type="match status" value="1"/>
</dbReference>
<dbReference type="SUPFAM" id="SSF55770">
    <property type="entry name" value="Profilin (actin-binding protein)"/>
    <property type="match status" value="1"/>
</dbReference>
<dbReference type="PROSITE" id="PS00414">
    <property type="entry name" value="PROFILIN"/>
    <property type="match status" value="1"/>
</dbReference>
<comment type="function">
    <text evidence="1">Binds to actin and affects the structure of the cytoskeleton. At high concentrations, profilin prevents the polymerization of actin, whereas it enhances it at low concentrations. By binding to PIP2, it inhibits the formation of IP3 and DG (By similarity).</text>
</comment>
<comment type="subunit">
    <text>Occurs in many kinds of cells as a complex with monomeric actin in a 1:1 ratio.</text>
</comment>
<comment type="subcellular location">
    <subcellularLocation>
        <location evidence="1">Cytoplasm</location>
        <location evidence="1">Cytoskeleton</location>
    </subcellularLocation>
</comment>
<comment type="allergen">
    <text evidence="2">Causes an allergic reaction in human.</text>
</comment>
<comment type="similarity">
    <text evidence="3">Belongs to the profilin family.</text>
</comment>
<accession>O65810</accession>
<reference key="1">
    <citation type="journal article" date="1999" name="J. Allergy Clin. Immunol.">
        <title>IgE binding of the recombinant allergen soybean profilin (rGly m 3) is mediated by conformational epitopes.</title>
        <authorList>
            <person name="Rihs H.-P."/>
            <person name="Chen Z."/>
            <person name="Rueff F."/>
            <person name="Petersen A."/>
            <person name="Rozynek P."/>
            <person name="Heimann H."/>
            <person name="Baur X."/>
        </authorList>
    </citation>
    <scope>NUCLEOTIDE SEQUENCE [MRNA]</scope>
    <scope>ALLERGEN</scope>
</reference>
<proteinExistence type="evidence at protein level"/>
<evidence type="ECO:0000250" key="1"/>
<evidence type="ECO:0000269" key="2">
    <source>
    </source>
</evidence>
<evidence type="ECO:0000305" key="3"/>
<protein>
    <recommendedName>
        <fullName>Profilin-2</fullName>
    </recommendedName>
    <alternativeName>
        <fullName>GmPRO2</fullName>
    </alternativeName>
    <allergenName>Gly m 3.0102</allergenName>
</protein>
<name>PROF2_SOYBN</name>
<feature type="initiator methionine" description="Removed" evidence="1">
    <location>
        <position position="1"/>
    </location>
</feature>
<feature type="chain" id="PRO_0000199673" description="Profilin-2">
    <location>
        <begin position="2"/>
        <end position="131"/>
    </location>
</feature>
<keyword id="KW-0009">Actin-binding</keyword>
<keyword id="KW-0020">Allergen</keyword>
<keyword id="KW-0963">Cytoplasm</keyword>
<keyword id="KW-0206">Cytoskeleton</keyword>
<keyword id="KW-1185">Reference proteome</keyword>
<gene>
    <name type="primary">PRO2</name>
</gene>
<organism>
    <name type="scientific">Glycine max</name>
    <name type="common">Soybean</name>
    <name type="synonym">Glycine hispida</name>
    <dbReference type="NCBI Taxonomy" id="3847"/>
    <lineage>
        <taxon>Eukaryota</taxon>
        <taxon>Viridiplantae</taxon>
        <taxon>Streptophyta</taxon>
        <taxon>Embryophyta</taxon>
        <taxon>Tracheophyta</taxon>
        <taxon>Spermatophyta</taxon>
        <taxon>Magnoliopsida</taxon>
        <taxon>eudicotyledons</taxon>
        <taxon>Gunneridae</taxon>
        <taxon>Pentapetalae</taxon>
        <taxon>rosids</taxon>
        <taxon>fabids</taxon>
        <taxon>Fabales</taxon>
        <taxon>Fabaceae</taxon>
        <taxon>Papilionoideae</taxon>
        <taxon>50 kb inversion clade</taxon>
        <taxon>NPAAA clade</taxon>
        <taxon>indigoferoid/millettioid clade</taxon>
        <taxon>Phaseoleae</taxon>
        <taxon>Glycine</taxon>
        <taxon>Glycine subgen. Soja</taxon>
    </lineage>
</organism>